<sequence length="338" mass="36513">MKVFYDKDCDLSLIKGKTVAIIGYGSQGHAHAQNLNDSGVKVVVGLRKGGASWPKVEKAGLQVAEVADAVKAADVVMILLPDEQIGAVYKNDVAPNIKQGASLVFAHGFNVHYGAVIPRDDLDVWMVAPKAPGHTVRNTYTQGGGVPHLVAVHQDKSGKARDLALSYAMANGGGKAGIIETNFREETETDLFGEQAVLCGGAVELIKAGFETLVEAGYAPEMAYFECLHELKLIVDLIYEGGIANMNYSISNNAEYGEYVTGPRIVTEDTKNAMRAVLKDIQTGEYAKSFLLENIAGAPTLISRRRLNAEHQIEQVGGKLRAMMPWIAKNKLVDQTRN</sequence>
<proteinExistence type="inferred from homology"/>
<dbReference type="EC" id="1.1.1.86" evidence="1"/>
<dbReference type="EMBL" id="CP000529">
    <property type="protein sequence ID" value="ABM37032.1"/>
    <property type="molecule type" value="Genomic_DNA"/>
</dbReference>
<dbReference type="RefSeq" id="WP_011801118.1">
    <property type="nucleotide sequence ID" value="NC_008781.1"/>
</dbReference>
<dbReference type="SMR" id="A1VN04"/>
<dbReference type="STRING" id="365044.Pnap_1719"/>
<dbReference type="KEGG" id="pna:Pnap_1719"/>
<dbReference type="eggNOG" id="COG0059">
    <property type="taxonomic scope" value="Bacteria"/>
</dbReference>
<dbReference type="HOGENOM" id="CLU_033821_0_1_4"/>
<dbReference type="OrthoDB" id="9804088at2"/>
<dbReference type="UniPathway" id="UPA00047">
    <property type="reaction ID" value="UER00056"/>
</dbReference>
<dbReference type="UniPathway" id="UPA00049">
    <property type="reaction ID" value="UER00060"/>
</dbReference>
<dbReference type="Proteomes" id="UP000000644">
    <property type="component" value="Chromosome"/>
</dbReference>
<dbReference type="GO" id="GO:0005829">
    <property type="term" value="C:cytosol"/>
    <property type="evidence" value="ECO:0007669"/>
    <property type="project" value="TreeGrafter"/>
</dbReference>
<dbReference type="GO" id="GO:0004455">
    <property type="term" value="F:ketol-acid reductoisomerase activity"/>
    <property type="evidence" value="ECO:0007669"/>
    <property type="project" value="UniProtKB-UniRule"/>
</dbReference>
<dbReference type="GO" id="GO:0000287">
    <property type="term" value="F:magnesium ion binding"/>
    <property type="evidence" value="ECO:0007669"/>
    <property type="project" value="UniProtKB-UniRule"/>
</dbReference>
<dbReference type="GO" id="GO:0050661">
    <property type="term" value="F:NADP binding"/>
    <property type="evidence" value="ECO:0007669"/>
    <property type="project" value="InterPro"/>
</dbReference>
<dbReference type="GO" id="GO:0009097">
    <property type="term" value="P:isoleucine biosynthetic process"/>
    <property type="evidence" value="ECO:0007669"/>
    <property type="project" value="UniProtKB-UniRule"/>
</dbReference>
<dbReference type="GO" id="GO:0009099">
    <property type="term" value="P:L-valine biosynthetic process"/>
    <property type="evidence" value="ECO:0007669"/>
    <property type="project" value="UniProtKB-UniRule"/>
</dbReference>
<dbReference type="FunFam" id="3.40.50.720:FF:000023">
    <property type="entry name" value="Ketol-acid reductoisomerase (NADP(+))"/>
    <property type="match status" value="1"/>
</dbReference>
<dbReference type="Gene3D" id="6.10.240.10">
    <property type="match status" value="1"/>
</dbReference>
<dbReference type="Gene3D" id="3.40.50.720">
    <property type="entry name" value="NAD(P)-binding Rossmann-like Domain"/>
    <property type="match status" value="1"/>
</dbReference>
<dbReference type="HAMAP" id="MF_00435">
    <property type="entry name" value="IlvC"/>
    <property type="match status" value="1"/>
</dbReference>
<dbReference type="InterPro" id="IPR008927">
    <property type="entry name" value="6-PGluconate_DH-like_C_sf"/>
</dbReference>
<dbReference type="InterPro" id="IPR013023">
    <property type="entry name" value="KARI"/>
</dbReference>
<dbReference type="InterPro" id="IPR000506">
    <property type="entry name" value="KARI_C"/>
</dbReference>
<dbReference type="InterPro" id="IPR013116">
    <property type="entry name" value="KARI_N"/>
</dbReference>
<dbReference type="InterPro" id="IPR014359">
    <property type="entry name" value="KARI_prok"/>
</dbReference>
<dbReference type="InterPro" id="IPR036291">
    <property type="entry name" value="NAD(P)-bd_dom_sf"/>
</dbReference>
<dbReference type="NCBIfam" id="TIGR00465">
    <property type="entry name" value="ilvC"/>
    <property type="match status" value="1"/>
</dbReference>
<dbReference type="NCBIfam" id="NF004017">
    <property type="entry name" value="PRK05479.1"/>
    <property type="match status" value="1"/>
</dbReference>
<dbReference type="NCBIfam" id="NF009940">
    <property type="entry name" value="PRK13403.1"/>
    <property type="match status" value="1"/>
</dbReference>
<dbReference type="PANTHER" id="PTHR21371">
    <property type="entry name" value="KETOL-ACID REDUCTOISOMERASE, MITOCHONDRIAL"/>
    <property type="match status" value="1"/>
</dbReference>
<dbReference type="PANTHER" id="PTHR21371:SF1">
    <property type="entry name" value="KETOL-ACID REDUCTOISOMERASE, MITOCHONDRIAL"/>
    <property type="match status" value="1"/>
</dbReference>
<dbReference type="Pfam" id="PF01450">
    <property type="entry name" value="KARI_C"/>
    <property type="match status" value="1"/>
</dbReference>
<dbReference type="Pfam" id="PF07991">
    <property type="entry name" value="KARI_N"/>
    <property type="match status" value="1"/>
</dbReference>
<dbReference type="PIRSF" id="PIRSF000116">
    <property type="entry name" value="IlvC_gammaproteo"/>
    <property type="match status" value="1"/>
</dbReference>
<dbReference type="SUPFAM" id="SSF48179">
    <property type="entry name" value="6-phosphogluconate dehydrogenase C-terminal domain-like"/>
    <property type="match status" value="1"/>
</dbReference>
<dbReference type="SUPFAM" id="SSF51735">
    <property type="entry name" value="NAD(P)-binding Rossmann-fold domains"/>
    <property type="match status" value="1"/>
</dbReference>
<dbReference type="PROSITE" id="PS51851">
    <property type="entry name" value="KARI_C"/>
    <property type="match status" value="1"/>
</dbReference>
<dbReference type="PROSITE" id="PS51850">
    <property type="entry name" value="KARI_N"/>
    <property type="match status" value="1"/>
</dbReference>
<evidence type="ECO:0000255" key="1">
    <source>
        <dbReference type="HAMAP-Rule" id="MF_00435"/>
    </source>
</evidence>
<evidence type="ECO:0000255" key="2">
    <source>
        <dbReference type="PROSITE-ProRule" id="PRU01197"/>
    </source>
</evidence>
<evidence type="ECO:0000255" key="3">
    <source>
        <dbReference type="PROSITE-ProRule" id="PRU01198"/>
    </source>
</evidence>
<keyword id="KW-0028">Amino-acid biosynthesis</keyword>
<keyword id="KW-0100">Branched-chain amino acid biosynthesis</keyword>
<keyword id="KW-0460">Magnesium</keyword>
<keyword id="KW-0479">Metal-binding</keyword>
<keyword id="KW-0521">NADP</keyword>
<keyword id="KW-0560">Oxidoreductase</keyword>
<keyword id="KW-1185">Reference proteome</keyword>
<feature type="chain" id="PRO_1000050551" description="Ketol-acid reductoisomerase (NADP(+))">
    <location>
        <begin position="1"/>
        <end position="338"/>
    </location>
</feature>
<feature type="domain" description="KARI N-terminal Rossmann" evidence="2">
    <location>
        <begin position="1"/>
        <end position="181"/>
    </location>
</feature>
<feature type="domain" description="KARI C-terminal knotted" evidence="3">
    <location>
        <begin position="182"/>
        <end position="327"/>
    </location>
</feature>
<feature type="active site" evidence="1">
    <location>
        <position position="107"/>
    </location>
</feature>
<feature type="binding site" evidence="1">
    <location>
        <begin position="24"/>
        <end position="27"/>
    </location>
    <ligand>
        <name>NADP(+)</name>
        <dbReference type="ChEBI" id="CHEBI:58349"/>
    </ligand>
</feature>
<feature type="binding site" evidence="1">
    <location>
        <position position="47"/>
    </location>
    <ligand>
        <name>NADP(+)</name>
        <dbReference type="ChEBI" id="CHEBI:58349"/>
    </ligand>
</feature>
<feature type="binding site" evidence="1">
    <location>
        <position position="52"/>
    </location>
    <ligand>
        <name>NADP(+)</name>
        <dbReference type="ChEBI" id="CHEBI:58349"/>
    </ligand>
</feature>
<feature type="binding site" evidence="1">
    <location>
        <position position="133"/>
    </location>
    <ligand>
        <name>NADP(+)</name>
        <dbReference type="ChEBI" id="CHEBI:58349"/>
    </ligand>
</feature>
<feature type="binding site" evidence="1">
    <location>
        <position position="190"/>
    </location>
    <ligand>
        <name>Mg(2+)</name>
        <dbReference type="ChEBI" id="CHEBI:18420"/>
        <label>1</label>
    </ligand>
</feature>
<feature type="binding site" evidence="1">
    <location>
        <position position="190"/>
    </location>
    <ligand>
        <name>Mg(2+)</name>
        <dbReference type="ChEBI" id="CHEBI:18420"/>
        <label>2</label>
    </ligand>
</feature>
<feature type="binding site" evidence="1">
    <location>
        <position position="194"/>
    </location>
    <ligand>
        <name>Mg(2+)</name>
        <dbReference type="ChEBI" id="CHEBI:18420"/>
        <label>1</label>
    </ligand>
</feature>
<feature type="binding site" evidence="1">
    <location>
        <position position="226"/>
    </location>
    <ligand>
        <name>Mg(2+)</name>
        <dbReference type="ChEBI" id="CHEBI:18420"/>
        <label>2</label>
    </ligand>
</feature>
<feature type="binding site" evidence="1">
    <location>
        <position position="230"/>
    </location>
    <ligand>
        <name>Mg(2+)</name>
        <dbReference type="ChEBI" id="CHEBI:18420"/>
        <label>2</label>
    </ligand>
</feature>
<feature type="binding site" evidence="1">
    <location>
        <position position="251"/>
    </location>
    <ligand>
        <name>substrate</name>
    </ligand>
</feature>
<name>ILVC_POLNA</name>
<gene>
    <name evidence="1" type="primary">ilvC</name>
    <name type="ordered locus">Pnap_1719</name>
</gene>
<reference key="1">
    <citation type="journal article" date="2009" name="Environ. Microbiol.">
        <title>The genome of Polaromonas naphthalenivorans strain CJ2, isolated from coal tar-contaminated sediment, reveals physiological and metabolic versatility and evolution through extensive horizontal gene transfer.</title>
        <authorList>
            <person name="Yagi J.M."/>
            <person name="Sims D."/>
            <person name="Brettin T."/>
            <person name="Bruce D."/>
            <person name="Madsen E.L."/>
        </authorList>
    </citation>
    <scope>NUCLEOTIDE SEQUENCE [LARGE SCALE GENOMIC DNA]</scope>
    <source>
        <strain>CJ2</strain>
    </source>
</reference>
<accession>A1VN04</accession>
<protein>
    <recommendedName>
        <fullName evidence="1">Ketol-acid reductoisomerase (NADP(+))</fullName>
        <shortName evidence="1">KARI</shortName>
        <ecNumber evidence="1">1.1.1.86</ecNumber>
    </recommendedName>
    <alternativeName>
        <fullName evidence="1">Acetohydroxy-acid isomeroreductase</fullName>
        <shortName evidence="1">AHIR</shortName>
    </alternativeName>
    <alternativeName>
        <fullName evidence="1">Alpha-keto-beta-hydroxylacyl reductoisomerase</fullName>
    </alternativeName>
    <alternativeName>
        <fullName evidence="1">Ketol-acid reductoisomerase type 1</fullName>
    </alternativeName>
    <alternativeName>
        <fullName evidence="1">Ketol-acid reductoisomerase type I</fullName>
    </alternativeName>
</protein>
<comment type="function">
    <text evidence="1">Involved in the biosynthesis of branched-chain amino acids (BCAA). Catalyzes an alkyl-migration followed by a ketol-acid reduction of (S)-2-acetolactate (S2AL) to yield (R)-2,3-dihydroxy-isovalerate. In the isomerase reaction, S2AL is rearranged via a Mg-dependent methyl migration to produce 3-hydroxy-3-methyl-2-ketobutyrate (HMKB). In the reductase reaction, this 2-ketoacid undergoes a metal-dependent reduction by NADPH to yield (R)-2,3-dihydroxy-isovalerate.</text>
</comment>
<comment type="catalytic activity">
    <reaction evidence="1">
        <text>(2R)-2,3-dihydroxy-3-methylbutanoate + NADP(+) = (2S)-2-acetolactate + NADPH + H(+)</text>
        <dbReference type="Rhea" id="RHEA:22068"/>
        <dbReference type="ChEBI" id="CHEBI:15378"/>
        <dbReference type="ChEBI" id="CHEBI:49072"/>
        <dbReference type="ChEBI" id="CHEBI:57783"/>
        <dbReference type="ChEBI" id="CHEBI:58349"/>
        <dbReference type="ChEBI" id="CHEBI:58476"/>
        <dbReference type="EC" id="1.1.1.86"/>
    </reaction>
</comment>
<comment type="catalytic activity">
    <reaction evidence="1">
        <text>(2R,3R)-2,3-dihydroxy-3-methylpentanoate + NADP(+) = (S)-2-ethyl-2-hydroxy-3-oxobutanoate + NADPH + H(+)</text>
        <dbReference type="Rhea" id="RHEA:13493"/>
        <dbReference type="ChEBI" id="CHEBI:15378"/>
        <dbReference type="ChEBI" id="CHEBI:49256"/>
        <dbReference type="ChEBI" id="CHEBI:49258"/>
        <dbReference type="ChEBI" id="CHEBI:57783"/>
        <dbReference type="ChEBI" id="CHEBI:58349"/>
        <dbReference type="EC" id="1.1.1.86"/>
    </reaction>
</comment>
<comment type="cofactor">
    <cofactor evidence="1">
        <name>Mg(2+)</name>
        <dbReference type="ChEBI" id="CHEBI:18420"/>
    </cofactor>
    <text evidence="1">Binds 2 magnesium ions per subunit.</text>
</comment>
<comment type="pathway">
    <text evidence="1">Amino-acid biosynthesis; L-isoleucine biosynthesis; L-isoleucine from 2-oxobutanoate: step 2/4.</text>
</comment>
<comment type="pathway">
    <text evidence="1">Amino-acid biosynthesis; L-valine biosynthesis; L-valine from pyruvate: step 2/4.</text>
</comment>
<comment type="similarity">
    <text evidence="1">Belongs to the ketol-acid reductoisomerase family.</text>
</comment>
<organism>
    <name type="scientific">Polaromonas naphthalenivorans (strain CJ2)</name>
    <dbReference type="NCBI Taxonomy" id="365044"/>
    <lineage>
        <taxon>Bacteria</taxon>
        <taxon>Pseudomonadati</taxon>
        <taxon>Pseudomonadota</taxon>
        <taxon>Betaproteobacteria</taxon>
        <taxon>Burkholderiales</taxon>
        <taxon>Comamonadaceae</taxon>
        <taxon>Polaromonas</taxon>
    </lineage>
</organism>